<proteinExistence type="inferred from homology"/>
<comment type="function">
    <text evidence="1">Catalyzes the reversible oxidation of malate to oxaloacetate.</text>
</comment>
<comment type="catalytic activity">
    <reaction evidence="1">
        <text>(S)-malate + NAD(+) = oxaloacetate + NADH + H(+)</text>
        <dbReference type="Rhea" id="RHEA:21432"/>
        <dbReference type="ChEBI" id="CHEBI:15378"/>
        <dbReference type="ChEBI" id="CHEBI:15589"/>
        <dbReference type="ChEBI" id="CHEBI:16452"/>
        <dbReference type="ChEBI" id="CHEBI:57540"/>
        <dbReference type="ChEBI" id="CHEBI:57945"/>
        <dbReference type="EC" id="1.1.1.37"/>
    </reaction>
</comment>
<comment type="similarity">
    <text evidence="1">Belongs to the LDH/MDH superfamily. MDH type 3 family.</text>
</comment>
<accession>Q57AX1</accession>
<protein>
    <recommendedName>
        <fullName evidence="1">Malate dehydrogenase</fullName>
        <ecNumber evidence="1">1.1.1.37</ecNumber>
    </recommendedName>
</protein>
<feature type="chain" id="PRO_0000113442" description="Malate dehydrogenase">
    <location>
        <begin position="1"/>
        <end position="320"/>
    </location>
</feature>
<feature type="active site" description="Proton acceptor" evidence="1">
    <location>
        <position position="176"/>
    </location>
</feature>
<feature type="binding site" evidence="1">
    <location>
        <begin position="10"/>
        <end position="15"/>
    </location>
    <ligand>
        <name>NAD(+)</name>
        <dbReference type="ChEBI" id="CHEBI:57540"/>
    </ligand>
</feature>
<feature type="binding site" evidence="1">
    <location>
        <position position="34"/>
    </location>
    <ligand>
        <name>NAD(+)</name>
        <dbReference type="ChEBI" id="CHEBI:57540"/>
    </ligand>
</feature>
<feature type="binding site" evidence="1">
    <location>
        <position position="83"/>
    </location>
    <ligand>
        <name>substrate</name>
    </ligand>
</feature>
<feature type="binding site" evidence="1">
    <location>
        <position position="89"/>
    </location>
    <ligand>
        <name>substrate</name>
    </ligand>
</feature>
<feature type="binding site" evidence="1">
    <location>
        <position position="96"/>
    </location>
    <ligand>
        <name>NAD(+)</name>
        <dbReference type="ChEBI" id="CHEBI:57540"/>
    </ligand>
</feature>
<feature type="binding site" evidence="1">
    <location>
        <begin position="119"/>
        <end position="121"/>
    </location>
    <ligand>
        <name>NAD(+)</name>
        <dbReference type="ChEBI" id="CHEBI:57540"/>
    </ligand>
</feature>
<feature type="binding site" evidence="1">
    <location>
        <position position="121"/>
    </location>
    <ligand>
        <name>substrate</name>
    </ligand>
</feature>
<feature type="binding site" evidence="1">
    <location>
        <position position="152"/>
    </location>
    <ligand>
        <name>substrate</name>
    </ligand>
</feature>
<organism>
    <name type="scientific">Brucella abortus biovar 1 (strain 9-941)</name>
    <dbReference type="NCBI Taxonomy" id="262698"/>
    <lineage>
        <taxon>Bacteria</taxon>
        <taxon>Pseudomonadati</taxon>
        <taxon>Pseudomonadota</taxon>
        <taxon>Alphaproteobacteria</taxon>
        <taxon>Hyphomicrobiales</taxon>
        <taxon>Brucellaceae</taxon>
        <taxon>Brucella/Ochrobactrum group</taxon>
        <taxon>Brucella</taxon>
    </lineage>
</organism>
<reference key="1">
    <citation type="journal article" date="2005" name="J. Bacteriol.">
        <title>Completion of the genome sequence of Brucella abortus and comparison to the highly similar genomes of Brucella melitensis and Brucella suis.</title>
        <authorList>
            <person name="Halling S.M."/>
            <person name="Peterson-Burch B.D."/>
            <person name="Bricker B.J."/>
            <person name="Zuerner R.L."/>
            <person name="Qing Z."/>
            <person name="Li L.-L."/>
            <person name="Kapur V."/>
            <person name="Alt D.P."/>
            <person name="Olsen S.C."/>
        </authorList>
    </citation>
    <scope>NUCLEOTIDE SEQUENCE [LARGE SCALE GENOMIC DNA]</scope>
    <source>
        <strain>9-941</strain>
    </source>
</reference>
<name>MDH_BRUAB</name>
<sequence>MARNKIALIGSGMIGGTLAHLAGLKELGDVVLFDIAEGTPQGKGLDIAESSPVDGFDAKFTGANDYAAIEGADVVIVTAGVPRKPGMSRDDLLGINLKVMEQVGAGIKKYAPEAFVICITNPLDAMVWALQKFSGLPAHKVVGMAGVLDSARFRYFLSEEFNVSVEDVTVFVLGGHGDSMVPLARYSTVAGIPLPDLVKMGWTSQDKLDKIIQRTRDGGAEIVGLLKTGSAFYAPAASAIQMAESYLKDKKRVLPVAAQLSGQYGVKDMYVGVPTVIGANGVERIIEIDLDKDEKAQFDKSVASVAGLCEACIGIAPSLK</sequence>
<evidence type="ECO:0000255" key="1">
    <source>
        <dbReference type="HAMAP-Rule" id="MF_00487"/>
    </source>
</evidence>
<gene>
    <name evidence="1" type="primary">mdh</name>
    <name type="ordered locus">BruAb1_1903</name>
</gene>
<keyword id="KW-0520">NAD</keyword>
<keyword id="KW-0560">Oxidoreductase</keyword>
<keyword id="KW-0816">Tricarboxylic acid cycle</keyword>
<dbReference type="EC" id="1.1.1.37" evidence="1"/>
<dbReference type="EMBL" id="AE017223">
    <property type="protein sequence ID" value="AAX75213.1"/>
    <property type="molecule type" value="Genomic_DNA"/>
</dbReference>
<dbReference type="RefSeq" id="WP_002964995.1">
    <property type="nucleotide sequence ID" value="NC_006932.1"/>
</dbReference>
<dbReference type="SMR" id="Q57AX1"/>
<dbReference type="EnsemblBacteria" id="AAX75213">
    <property type="protein sequence ID" value="AAX75213"/>
    <property type="gene ID" value="BruAb1_1903"/>
</dbReference>
<dbReference type="GeneID" id="93017742"/>
<dbReference type="KEGG" id="bmb:BruAb1_1903"/>
<dbReference type="HOGENOM" id="CLU_045401_2_1_5"/>
<dbReference type="Proteomes" id="UP000000540">
    <property type="component" value="Chromosome I"/>
</dbReference>
<dbReference type="GO" id="GO:0004459">
    <property type="term" value="F:L-lactate dehydrogenase activity"/>
    <property type="evidence" value="ECO:0007669"/>
    <property type="project" value="TreeGrafter"/>
</dbReference>
<dbReference type="GO" id="GO:0030060">
    <property type="term" value="F:L-malate dehydrogenase (NAD+) activity"/>
    <property type="evidence" value="ECO:0007669"/>
    <property type="project" value="UniProtKB-UniRule"/>
</dbReference>
<dbReference type="GO" id="GO:0006089">
    <property type="term" value="P:lactate metabolic process"/>
    <property type="evidence" value="ECO:0007669"/>
    <property type="project" value="TreeGrafter"/>
</dbReference>
<dbReference type="GO" id="GO:0006099">
    <property type="term" value="P:tricarboxylic acid cycle"/>
    <property type="evidence" value="ECO:0007669"/>
    <property type="project" value="UniProtKB-UniRule"/>
</dbReference>
<dbReference type="CDD" id="cd01339">
    <property type="entry name" value="LDH-like_MDH"/>
    <property type="match status" value="1"/>
</dbReference>
<dbReference type="FunFam" id="3.40.50.720:FF:000018">
    <property type="entry name" value="Malate dehydrogenase"/>
    <property type="match status" value="1"/>
</dbReference>
<dbReference type="FunFam" id="3.90.110.10:FF:000004">
    <property type="entry name" value="Malate dehydrogenase"/>
    <property type="match status" value="1"/>
</dbReference>
<dbReference type="Gene3D" id="3.90.110.10">
    <property type="entry name" value="Lactate dehydrogenase/glycoside hydrolase, family 4, C-terminal"/>
    <property type="match status" value="1"/>
</dbReference>
<dbReference type="Gene3D" id="3.40.50.720">
    <property type="entry name" value="NAD(P)-binding Rossmann-like Domain"/>
    <property type="match status" value="1"/>
</dbReference>
<dbReference type="HAMAP" id="MF_00487">
    <property type="entry name" value="Malate_dehydrog_3"/>
    <property type="match status" value="1"/>
</dbReference>
<dbReference type="InterPro" id="IPR001557">
    <property type="entry name" value="L-lactate/malate_DH"/>
</dbReference>
<dbReference type="InterPro" id="IPR022383">
    <property type="entry name" value="Lactate/malate_DH_C"/>
</dbReference>
<dbReference type="InterPro" id="IPR001236">
    <property type="entry name" value="Lactate/malate_DH_N"/>
</dbReference>
<dbReference type="InterPro" id="IPR015955">
    <property type="entry name" value="Lactate_DH/Glyco_Ohase_4_C"/>
</dbReference>
<dbReference type="InterPro" id="IPR011275">
    <property type="entry name" value="Malate_DH_type3"/>
</dbReference>
<dbReference type="InterPro" id="IPR036291">
    <property type="entry name" value="NAD(P)-bd_dom_sf"/>
</dbReference>
<dbReference type="NCBIfam" id="TIGR01763">
    <property type="entry name" value="MalateDH_bact"/>
    <property type="match status" value="1"/>
</dbReference>
<dbReference type="NCBIfam" id="NF004863">
    <property type="entry name" value="PRK06223.1"/>
    <property type="match status" value="1"/>
</dbReference>
<dbReference type="PANTHER" id="PTHR43128">
    <property type="entry name" value="L-2-HYDROXYCARBOXYLATE DEHYDROGENASE (NAD(P)(+))"/>
    <property type="match status" value="1"/>
</dbReference>
<dbReference type="PANTHER" id="PTHR43128:SF16">
    <property type="entry name" value="L-LACTATE DEHYDROGENASE"/>
    <property type="match status" value="1"/>
</dbReference>
<dbReference type="Pfam" id="PF02866">
    <property type="entry name" value="Ldh_1_C"/>
    <property type="match status" value="1"/>
</dbReference>
<dbReference type="Pfam" id="PF00056">
    <property type="entry name" value="Ldh_1_N"/>
    <property type="match status" value="1"/>
</dbReference>
<dbReference type="PIRSF" id="PIRSF000102">
    <property type="entry name" value="Lac_mal_DH"/>
    <property type="match status" value="1"/>
</dbReference>
<dbReference type="PRINTS" id="PR00086">
    <property type="entry name" value="LLDHDRGNASE"/>
</dbReference>
<dbReference type="SUPFAM" id="SSF56327">
    <property type="entry name" value="LDH C-terminal domain-like"/>
    <property type="match status" value="1"/>
</dbReference>
<dbReference type="SUPFAM" id="SSF51735">
    <property type="entry name" value="NAD(P)-binding Rossmann-fold domains"/>
    <property type="match status" value="1"/>
</dbReference>